<feature type="transit peptide" description="Chloroplast" evidence="1">
    <location>
        <begin position="1"/>
        <end position="77"/>
    </location>
</feature>
<feature type="chain" id="PRO_0000029575" description="Oxygen-evolving enhancer protein 2, chloroplastic">
    <location>
        <begin position="78"/>
        <end position="263"/>
    </location>
</feature>
<organism>
    <name type="scientific">Cucumis sativus</name>
    <name type="common">Cucumber</name>
    <dbReference type="NCBI Taxonomy" id="3659"/>
    <lineage>
        <taxon>Eukaryota</taxon>
        <taxon>Viridiplantae</taxon>
        <taxon>Streptophyta</taxon>
        <taxon>Embryophyta</taxon>
        <taxon>Tracheophyta</taxon>
        <taxon>Spermatophyta</taxon>
        <taxon>Magnoliopsida</taxon>
        <taxon>eudicotyledons</taxon>
        <taxon>Gunneridae</taxon>
        <taxon>Pentapetalae</taxon>
        <taxon>rosids</taxon>
        <taxon>fabids</taxon>
        <taxon>Cucurbitales</taxon>
        <taxon>Cucurbitaceae</taxon>
        <taxon>Benincaseae</taxon>
        <taxon>Cucumis</taxon>
    </lineage>
</organism>
<evidence type="ECO:0000250" key="1"/>
<evidence type="ECO:0000305" key="2"/>
<gene>
    <name type="primary">PSBP</name>
</gene>
<proteinExistence type="evidence at transcript level"/>
<name>PSBP_CUCSA</name>
<dbReference type="EMBL" id="AB032245">
    <property type="protein sequence ID" value="BAA89317.1"/>
    <property type="molecule type" value="mRNA"/>
</dbReference>
<dbReference type="RefSeq" id="XP_004147746.1">
    <property type="nucleotide sequence ID" value="XM_004147698.2"/>
</dbReference>
<dbReference type="SMR" id="Q9SLQ8"/>
<dbReference type="EnsemblPlants" id="KGN53510">
    <property type="protein sequence ID" value="KGN53510"/>
    <property type="gene ID" value="Csa_4G063440"/>
</dbReference>
<dbReference type="GeneID" id="101214094"/>
<dbReference type="Gramene" id="KGN53510">
    <property type="protein sequence ID" value="KGN53510"/>
    <property type="gene ID" value="Csa_4G063440"/>
</dbReference>
<dbReference type="KEGG" id="csv:101214094"/>
<dbReference type="eggNOG" id="ENOG502QUMW">
    <property type="taxonomic scope" value="Eukaryota"/>
</dbReference>
<dbReference type="OMA" id="WFKGQER"/>
<dbReference type="OrthoDB" id="507333at2759"/>
<dbReference type="GO" id="GO:0009535">
    <property type="term" value="C:chloroplast thylakoid membrane"/>
    <property type="evidence" value="ECO:0007669"/>
    <property type="project" value="UniProtKB-SubCell"/>
</dbReference>
<dbReference type="GO" id="GO:0019898">
    <property type="term" value="C:extrinsic component of membrane"/>
    <property type="evidence" value="ECO:0007669"/>
    <property type="project" value="InterPro"/>
</dbReference>
<dbReference type="GO" id="GO:0009654">
    <property type="term" value="C:photosystem II oxygen evolving complex"/>
    <property type="evidence" value="ECO:0007669"/>
    <property type="project" value="InterPro"/>
</dbReference>
<dbReference type="GO" id="GO:0005509">
    <property type="term" value="F:calcium ion binding"/>
    <property type="evidence" value="ECO:0007669"/>
    <property type="project" value="InterPro"/>
</dbReference>
<dbReference type="GO" id="GO:0015979">
    <property type="term" value="P:photosynthesis"/>
    <property type="evidence" value="ECO:0007669"/>
    <property type="project" value="UniProtKB-KW"/>
</dbReference>
<dbReference type="Gene3D" id="3.40.1000.10">
    <property type="entry name" value="Mog1/PsbP, alpha/beta/alpha sandwich"/>
    <property type="match status" value="1"/>
</dbReference>
<dbReference type="InterPro" id="IPR016123">
    <property type="entry name" value="Mog1/PsbP_a/b/a-sand"/>
</dbReference>
<dbReference type="InterPro" id="IPR002683">
    <property type="entry name" value="PsbP_C"/>
</dbReference>
<dbReference type="PANTHER" id="PTHR31407">
    <property type="match status" value="1"/>
</dbReference>
<dbReference type="PANTHER" id="PTHR31407:SF6">
    <property type="entry name" value="OXYGEN-EVOLVING ENHANCER PROTEIN 2-1, CHLOROPLASTIC"/>
    <property type="match status" value="1"/>
</dbReference>
<dbReference type="Pfam" id="PF01789">
    <property type="entry name" value="PsbP"/>
    <property type="match status" value="1"/>
</dbReference>
<dbReference type="SUPFAM" id="SSF55724">
    <property type="entry name" value="Mog1p/PsbP-like"/>
    <property type="match status" value="1"/>
</dbReference>
<keyword id="KW-0150">Chloroplast</keyword>
<keyword id="KW-0472">Membrane</keyword>
<keyword id="KW-0602">Photosynthesis</keyword>
<keyword id="KW-0604">Photosystem II</keyword>
<keyword id="KW-0934">Plastid</keyword>
<keyword id="KW-0793">Thylakoid</keyword>
<keyword id="KW-0809">Transit peptide</keyword>
<reference key="1">
    <citation type="online journal article" date="2000" name="Plant Gene Register">
        <title>Isolation of cucumber cDNA for the 23 kDa polypeptide of the oxygen-evolving complex of photosystem II (PsbP).</title>
        <authorList>
            <person name="Ifuku K."/>
            <person name="Kanda Y."/>
            <person name="Sato F."/>
        </authorList>
        <locator>PGR00-031</locator>
    </citation>
    <scope>NUCLEOTIDE SEQUENCE [MRNA]</scope>
    <source>
        <strain>cv. Aonagajibai</strain>
    </source>
</reference>
<sequence length="263" mass="28139">MASTSCFLHHHALTAAARSSSSPRQAALPKSPQLLVCRAQKQQPAQEEEGGVVSRRLALTVLIGAAALGSKVSPADAAYGEAANVFGKPKSNTDYLPYSGDGFKLSIPSKWNPSKEREFPGQVLRYEDNFDSNSNLSVIINPTDKKSIKDFGSPEEFLSKVDYLLGKQAYFGKTASEGGFDPDAVATANILEATASNVNGKDYYFVSVLTRTADGDEGGKHQLITATVNDGKLYICKAQAGDKRWFKGARKFVEGAASSFSVA</sequence>
<comment type="function">
    <text>May be involved in the regulation of photosystem II.</text>
</comment>
<comment type="subcellular location">
    <subcellularLocation>
        <location>Plastid</location>
        <location>Chloroplast thylakoid membrane</location>
    </subcellularLocation>
    <text>Associated with the photosystem II complex.</text>
</comment>
<comment type="similarity">
    <text evidence="2">Belongs to the PsbP family.</text>
</comment>
<accession>Q9SLQ8</accession>
<protein>
    <recommendedName>
        <fullName>Oxygen-evolving enhancer protein 2, chloroplastic</fullName>
        <shortName>OEE2</shortName>
    </recommendedName>
    <alternativeName>
        <fullName>23 kDa subunit of oxygen evolving system of photosystem II</fullName>
    </alternativeName>
    <alternativeName>
        <fullName>23 kDa thylakoid membrane protein</fullName>
    </alternativeName>
    <alternativeName>
        <fullName>OEC 23 kDa subunit</fullName>
    </alternativeName>
    <alternativeName>
        <fullName>OEC23</fullName>
    </alternativeName>
</protein>